<dbReference type="EMBL" id="CP000932">
    <property type="protein sequence ID" value="ACM64083.1"/>
    <property type="molecule type" value="Genomic_DNA"/>
</dbReference>
<dbReference type="RefSeq" id="WP_012661466.1">
    <property type="nucleotide sequence ID" value="NC_012039.1"/>
</dbReference>
<dbReference type="SMR" id="B9KG98"/>
<dbReference type="STRING" id="306263.Cla_0755"/>
<dbReference type="KEGG" id="cla:CLA_0755"/>
<dbReference type="PATRIC" id="fig|306263.5.peg.735"/>
<dbReference type="eggNOG" id="COG0359">
    <property type="taxonomic scope" value="Bacteria"/>
</dbReference>
<dbReference type="HOGENOM" id="CLU_078938_3_0_7"/>
<dbReference type="Proteomes" id="UP000007727">
    <property type="component" value="Chromosome"/>
</dbReference>
<dbReference type="GO" id="GO:1990904">
    <property type="term" value="C:ribonucleoprotein complex"/>
    <property type="evidence" value="ECO:0007669"/>
    <property type="project" value="UniProtKB-KW"/>
</dbReference>
<dbReference type="GO" id="GO:0005840">
    <property type="term" value="C:ribosome"/>
    <property type="evidence" value="ECO:0007669"/>
    <property type="project" value="UniProtKB-KW"/>
</dbReference>
<dbReference type="GO" id="GO:0019843">
    <property type="term" value="F:rRNA binding"/>
    <property type="evidence" value="ECO:0007669"/>
    <property type="project" value="UniProtKB-UniRule"/>
</dbReference>
<dbReference type="GO" id="GO:0003735">
    <property type="term" value="F:structural constituent of ribosome"/>
    <property type="evidence" value="ECO:0007669"/>
    <property type="project" value="InterPro"/>
</dbReference>
<dbReference type="GO" id="GO:0006412">
    <property type="term" value="P:translation"/>
    <property type="evidence" value="ECO:0007669"/>
    <property type="project" value="UniProtKB-UniRule"/>
</dbReference>
<dbReference type="FunFam" id="3.40.5.10:FF:000002">
    <property type="entry name" value="50S ribosomal protein L9"/>
    <property type="match status" value="1"/>
</dbReference>
<dbReference type="Gene3D" id="3.10.430.100">
    <property type="entry name" value="Ribosomal protein L9, C-terminal domain"/>
    <property type="match status" value="1"/>
</dbReference>
<dbReference type="Gene3D" id="3.40.5.10">
    <property type="entry name" value="Ribosomal protein L9, N-terminal domain"/>
    <property type="match status" value="1"/>
</dbReference>
<dbReference type="HAMAP" id="MF_00503">
    <property type="entry name" value="Ribosomal_bL9"/>
    <property type="match status" value="1"/>
</dbReference>
<dbReference type="InterPro" id="IPR000244">
    <property type="entry name" value="Ribosomal_bL9"/>
</dbReference>
<dbReference type="InterPro" id="IPR009027">
    <property type="entry name" value="Ribosomal_bL9/RNase_H1_N"/>
</dbReference>
<dbReference type="InterPro" id="IPR020594">
    <property type="entry name" value="Ribosomal_bL9_bac/chp"/>
</dbReference>
<dbReference type="InterPro" id="IPR020069">
    <property type="entry name" value="Ribosomal_bL9_C"/>
</dbReference>
<dbReference type="InterPro" id="IPR036791">
    <property type="entry name" value="Ribosomal_bL9_C_sf"/>
</dbReference>
<dbReference type="InterPro" id="IPR020070">
    <property type="entry name" value="Ribosomal_bL9_N"/>
</dbReference>
<dbReference type="InterPro" id="IPR036935">
    <property type="entry name" value="Ribosomal_bL9_N_sf"/>
</dbReference>
<dbReference type="NCBIfam" id="TIGR00158">
    <property type="entry name" value="L9"/>
    <property type="match status" value="1"/>
</dbReference>
<dbReference type="PANTHER" id="PTHR21368">
    <property type="entry name" value="50S RIBOSOMAL PROTEIN L9"/>
    <property type="match status" value="1"/>
</dbReference>
<dbReference type="Pfam" id="PF03948">
    <property type="entry name" value="Ribosomal_L9_C"/>
    <property type="match status" value="1"/>
</dbReference>
<dbReference type="Pfam" id="PF01281">
    <property type="entry name" value="Ribosomal_L9_N"/>
    <property type="match status" value="1"/>
</dbReference>
<dbReference type="SUPFAM" id="SSF55658">
    <property type="entry name" value="L9 N-domain-like"/>
    <property type="match status" value="1"/>
</dbReference>
<dbReference type="SUPFAM" id="SSF55653">
    <property type="entry name" value="Ribosomal protein L9 C-domain"/>
    <property type="match status" value="1"/>
</dbReference>
<dbReference type="PROSITE" id="PS00651">
    <property type="entry name" value="RIBOSOMAL_L9"/>
    <property type="match status" value="1"/>
</dbReference>
<name>RL9_CAMLR</name>
<reference key="1">
    <citation type="journal article" date="2008" name="Foodborne Pathog. Dis.">
        <title>The complete genome sequence and analysis of the human pathogen Campylobacter lari.</title>
        <authorList>
            <person name="Miller W.G."/>
            <person name="Wang G."/>
            <person name="Binnewies T.T."/>
            <person name="Parker C.T."/>
        </authorList>
    </citation>
    <scope>NUCLEOTIDE SEQUENCE [LARGE SCALE GENOMIC DNA]</scope>
    <source>
        <strain>RM2100 / D67 / ATCC BAA-1060</strain>
    </source>
</reference>
<accession>B9KG98</accession>
<evidence type="ECO:0000255" key="1">
    <source>
        <dbReference type="HAMAP-Rule" id="MF_00503"/>
    </source>
</evidence>
<evidence type="ECO:0000305" key="2"/>
<feature type="chain" id="PRO_1000196232" description="Large ribosomal subunit protein bL9">
    <location>
        <begin position="1"/>
        <end position="147"/>
    </location>
</feature>
<protein>
    <recommendedName>
        <fullName evidence="1">Large ribosomal subunit protein bL9</fullName>
    </recommendedName>
    <alternativeName>
        <fullName evidence="2">50S ribosomal protein L9</fullName>
    </alternativeName>
</protein>
<sequence length="147" mass="16298">MKVLLIKDVKSLGKAGEVKEVKDGYGQNFLIAKGFAKAATHEVLKQYEAEQKKKAENLRFELANLEKLKEELSKITICIAKPVGANGSLFGGITKDEIAHALKEQKNIEIDKKSLECDTIKELGMHEISIKLGHAIHAKFKLEVKGE</sequence>
<comment type="function">
    <text evidence="1">Binds to the 23S rRNA.</text>
</comment>
<comment type="similarity">
    <text evidence="1">Belongs to the bacterial ribosomal protein bL9 family.</text>
</comment>
<proteinExistence type="inferred from homology"/>
<keyword id="KW-1185">Reference proteome</keyword>
<keyword id="KW-0687">Ribonucleoprotein</keyword>
<keyword id="KW-0689">Ribosomal protein</keyword>
<keyword id="KW-0694">RNA-binding</keyword>
<keyword id="KW-0699">rRNA-binding</keyword>
<organism>
    <name type="scientific">Campylobacter lari (strain RM2100 / D67 / ATCC BAA-1060)</name>
    <dbReference type="NCBI Taxonomy" id="306263"/>
    <lineage>
        <taxon>Bacteria</taxon>
        <taxon>Pseudomonadati</taxon>
        <taxon>Campylobacterota</taxon>
        <taxon>Epsilonproteobacteria</taxon>
        <taxon>Campylobacterales</taxon>
        <taxon>Campylobacteraceae</taxon>
        <taxon>Campylobacter</taxon>
    </lineage>
</organism>
<gene>
    <name evidence="1" type="primary">rplI</name>
    <name type="ordered locus">Cla_0755</name>
</gene>